<accession>Q5XVH0</accession>
<accession>Q5XVH1</accession>
<accession>Q7XHI8</accession>
<accession>Q9C9F9</accession>
<gene>
    <name type="primary">BHLH109</name>
    <name type="ordered locus">At1g68240</name>
    <name type="ORF">T22E19.13</name>
</gene>
<evidence type="ECO:0000255" key="1">
    <source>
        <dbReference type="PROSITE-ProRule" id="PRU00981"/>
    </source>
</evidence>
<evidence type="ECO:0000269" key="2">
    <source>
    </source>
</evidence>
<evidence type="ECO:0000269" key="3">
    <source>
    </source>
</evidence>
<evidence type="ECO:0000303" key="4">
    <source>
    </source>
</evidence>
<evidence type="ECO:0000303" key="5">
    <source>
    </source>
</evidence>
<evidence type="ECO:0000305" key="6"/>
<sequence>MERNNRNEGTHEEEQCSLSDIIYSFCSENHSELNPLQEIFGVTKNNDHEKHDEEPDEESYRMAKRQRSMEYRMMMEKKRRKEIKDKVDILQGLMPNHCTKPDLASKLENIIEYIKSLKYQVDVMSMAYTTTPVYTPPFYAAAQAPCMSPWGYYTPGVPMMPQQNMTYIPQYPQVYGTVPPNQTQP</sequence>
<feature type="chain" id="PRO_0000358795" description="Transcription factor bHLH109">
    <location>
        <begin position="1"/>
        <end position="185"/>
    </location>
</feature>
<feature type="domain" description="bHLH" evidence="1">
    <location>
        <begin position="67"/>
        <end position="117"/>
    </location>
</feature>
<feature type="splice variant" id="VSP_036097" description="In isoform 3." evidence="5">
    <original>V</original>
    <variation>VSIKLYLI</variation>
    <location>
        <position position="123"/>
    </location>
</feature>
<feature type="splice variant" id="VSP_036098" description="In isoform 2." evidence="4">
    <location>
        <begin position="175"/>
        <end position="185"/>
    </location>
</feature>
<feature type="sequence conflict" description="In Ref. 1; CAE12172." evidence="6" ref="1">
    <location>
        <position position="78"/>
    </location>
</feature>
<reference key="1">
    <citation type="journal article" date="2003" name="Mol. Biol. Evol.">
        <title>The basic helix-loop-helix transcription factor family in plants: a genome-wide study of protein structure and functional diversity.</title>
        <authorList>
            <person name="Heim M.A."/>
            <person name="Jakoby M."/>
            <person name="Werber M."/>
            <person name="Martin C."/>
            <person name="Weisshaar B."/>
            <person name="Bailey P.C."/>
        </authorList>
    </citation>
    <scope>NUCLEOTIDE SEQUENCE [MRNA] (ISOFORM 3)</scope>
    <scope>GENE FAMILY</scope>
    <scope>NOMENCLATURE</scope>
    <source>
        <strain>cv. Columbia</strain>
    </source>
</reference>
<reference key="2">
    <citation type="journal article" date="2000" name="Nature">
        <title>Sequence and analysis of chromosome 1 of the plant Arabidopsis thaliana.</title>
        <authorList>
            <person name="Theologis A."/>
            <person name="Ecker J.R."/>
            <person name="Palm C.J."/>
            <person name="Federspiel N.A."/>
            <person name="Kaul S."/>
            <person name="White O."/>
            <person name="Alonso J."/>
            <person name="Altafi H."/>
            <person name="Araujo R."/>
            <person name="Bowman C.L."/>
            <person name="Brooks S.Y."/>
            <person name="Buehler E."/>
            <person name="Chan A."/>
            <person name="Chao Q."/>
            <person name="Chen H."/>
            <person name="Cheuk R.F."/>
            <person name="Chin C.W."/>
            <person name="Chung M.K."/>
            <person name="Conn L."/>
            <person name="Conway A.B."/>
            <person name="Conway A.R."/>
            <person name="Creasy T.H."/>
            <person name="Dewar K."/>
            <person name="Dunn P."/>
            <person name="Etgu P."/>
            <person name="Feldblyum T.V."/>
            <person name="Feng J.-D."/>
            <person name="Fong B."/>
            <person name="Fujii C.Y."/>
            <person name="Gill J.E."/>
            <person name="Goldsmith A.D."/>
            <person name="Haas B."/>
            <person name="Hansen N.F."/>
            <person name="Hughes B."/>
            <person name="Huizar L."/>
            <person name="Hunter J.L."/>
            <person name="Jenkins J."/>
            <person name="Johnson-Hopson C."/>
            <person name="Khan S."/>
            <person name="Khaykin E."/>
            <person name="Kim C.J."/>
            <person name="Koo H.L."/>
            <person name="Kremenetskaia I."/>
            <person name="Kurtz D.B."/>
            <person name="Kwan A."/>
            <person name="Lam B."/>
            <person name="Langin-Hooper S."/>
            <person name="Lee A."/>
            <person name="Lee J.M."/>
            <person name="Lenz C.A."/>
            <person name="Li J.H."/>
            <person name="Li Y.-P."/>
            <person name="Lin X."/>
            <person name="Liu S.X."/>
            <person name="Liu Z.A."/>
            <person name="Luros J.S."/>
            <person name="Maiti R."/>
            <person name="Marziali A."/>
            <person name="Militscher J."/>
            <person name="Miranda M."/>
            <person name="Nguyen M."/>
            <person name="Nierman W.C."/>
            <person name="Osborne B.I."/>
            <person name="Pai G."/>
            <person name="Peterson J."/>
            <person name="Pham P.K."/>
            <person name="Rizzo M."/>
            <person name="Rooney T."/>
            <person name="Rowley D."/>
            <person name="Sakano H."/>
            <person name="Salzberg S.L."/>
            <person name="Schwartz J.R."/>
            <person name="Shinn P."/>
            <person name="Southwick A.M."/>
            <person name="Sun H."/>
            <person name="Tallon L.J."/>
            <person name="Tambunga G."/>
            <person name="Toriumi M.J."/>
            <person name="Town C.D."/>
            <person name="Utterback T."/>
            <person name="Van Aken S."/>
            <person name="Vaysberg M."/>
            <person name="Vysotskaia V.S."/>
            <person name="Walker M."/>
            <person name="Wu D."/>
            <person name="Yu G."/>
            <person name="Fraser C.M."/>
            <person name="Venter J.C."/>
            <person name="Davis R.W."/>
        </authorList>
    </citation>
    <scope>NUCLEOTIDE SEQUENCE [LARGE SCALE GENOMIC DNA]</scope>
    <source>
        <strain>cv. Columbia</strain>
    </source>
</reference>
<reference key="3">
    <citation type="journal article" date="2017" name="Plant J.">
        <title>Araport11: a complete reannotation of the Arabidopsis thaliana reference genome.</title>
        <authorList>
            <person name="Cheng C.Y."/>
            <person name="Krishnakumar V."/>
            <person name="Chan A.P."/>
            <person name="Thibaud-Nissen F."/>
            <person name="Schobel S."/>
            <person name="Town C.D."/>
        </authorList>
    </citation>
    <scope>GENOME REANNOTATION</scope>
    <source>
        <strain>cv. Columbia</strain>
    </source>
</reference>
<reference key="4">
    <citation type="journal article" date="2002" name="Plant Physiol.">
        <title>Cloning and sequencing of cDNAs for hypothetical genes from chromosome 2 of Arabidopsis.</title>
        <authorList>
            <person name="Xiao Y.-L."/>
            <person name="Malik M."/>
            <person name="Whitelaw C.A."/>
            <person name="Town C.D."/>
        </authorList>
    </citation>
    <scope>NUCLEOTIDE SEQUENCE [LARGE SCALE MRNA] (ISOFORMS 1 AND 2)</scope>
    <source>
        <strain>cv. Columbia</strain>
    </source>
</reference>
<reference key="5">
    <citation type="submission" date="2005-02" db="EMBL/GenBank/DDBJ databases">
        <authorList>
            <person name="Underwood B.A."/>
            <person name="Xiao Y.-L."/>
            <person name="Moskal W.A. Jr."/>
            <person name="Monaghan E.L."/>
            <person name="Wang W."/>
            <person name="Redman J.C."/>
            <person name="Wu H.C."/>
            <person name="Utterback T."/>
            <person name="Town C.D."/>
        </authorList>
    </citation>
    <scope>NUCLEOTIDE SEQUENCE [LARGE SCALE MRNA] (ISOFORM 1)</scope>
    <source>
        <strain>cv. Columbia</strain>
    </source>
</reference>
<reference key="6">
    <citation type="journal article" date="2013" name="PLoS ONE">
        <title>Extensive modulation of the transcription factor transcriptome during somatic embryogenesis in Arabidopsis thaliana.</title>
        <authorList>
            <person name="Gliwicka M."/>
            <person name="Nowak K."/>
            <person name="Balazadeh S."/>
            <person name="Mueller-Roeber B."/>
            <person name="Gaj M.D."/>
        </authorList>
    </citation>
    <scope>FUNCTION</scope>
</reference>
<reference key="7">
    <citation type="journal article" date="2016" name="J. Plant Physiol.">
        <title>Stress-related function of bHLH109 in somatic embryo induction in Arabidopsis.</title>
        <authorList>
            <person name="Nowak K."/>
            <person name="Gaj M.D."/>
        </authorList>
    </citation>
    <scope>FUNCTION</scope>
    <scope>DEVELOPMENTAL STAGE</scope>
</reference>
<comment type="function">
    <text evidence="2 3">Transcription factor involved in somatic embryogenesis. Acts as a positive regulator of somatic embryo formation (PubMed:23874927, PubMed:26973252). Acts as a positive regulator of ECP63 by targeting its promoter and inducing its expression (PubMed:26973252).</text>
</comment>
<comment type="subunit">
    <text evidence="6">Homodimer.</text>
</comment>
<comment type="interaction">
    <interactant intactId="EBI-15193531">
        <id>Q5XVH0</id>
    </interactant>
    <interactant intactId="EBI-15197803">
        <id>Q9LT23-2</id>
        <label>BHLH121</label>
    </interactant>
    <organismsDiffer>false</organismsDiffer>
    <experiments>3</experiments>
</comment>
<comment type="interaction">
    <interactant intactId="EBI-15193531">
        <id>Q5XVH0</id>
    </interactant>
    <interactant intactId="EBI-1536734">
        <id>Q9LXD8</id>
        <label>HEC3</label>
    </interactant>
    <organismsDiffer>false</organismsDiffer>
    <experiments>5</experiments>
</comment>
<comment type="interaction">
    <interactant intactId="EBI-15193531">
        <id>Q5XVH0</id>
    </interactant>
    <interactant intactId="EBI-630752">
        <id>Q8L5W8</id>
        <label>PIL1</label>
    </interactant>
    <organismsDiffer>false</organismsDiffer>
    <experiments>3</experiments>
</comment>
<comment type="interaction">
    <interactant intactId="EBI-15193531">
        <id>Q5XVH0</id>
    </interactant>
    <interactant intactId="EBI-4424338">
        <id>Q9C707</id>
        <label>RHD6</label>
    </interactant>
    <organismsDiffer>false</organismsDiffer>
    <experiments>3</experiments>
</comment>
<comment type="subcellular location">
    <subcellularLocation>
        <location evidence="1">Nucleus</location>
    </subcellularLocation>
</comment>
<comment type="alternative products">
    <event type="alternative splicing"/>
    <isoform>
        <id>Q5XVH0-1</id>
        <name>1</name>
        <sequence type="displayed"/>
    </isoform>
    <isoform>
        <id>Q5XVH0-2</id>
        <name>2</name>
        <sequence type="described" ref="VSP_036098"/>
    </isoform>
    <isoform>
        <id>Q5XVH0-3</id>
        <name>3</name>
        <sequence type="described" ref="VSP_036097"/>
    </isoform>
</comment>
<comment type="developmental stage">
    <text evidence="3">Expressed during somatic embryogenesis.</text>
</comment>
<comment type="similarity">
    <text evidence="6">Belongs to the bHLH protein family.</text>
</comment>
<comment type="sequence caution" evidence="6">
    <conflict type="erroneous gene model prediction">
        <sequence resource="EMBL-CDS" id="AAG52603"/>
    </conflict>
</comment>
<organism>
    <name type="scientific">Arabidopsis thaliana</name>
    <name type="common">Mouse-ear cress</name>
    <dbReference type="NCBI Taxonomy" id="3702"/>
    <lineage>
        <taxon>Eukaryota</taxon>
        <taxon>Viridiplantae</taxon>
        <taxon>Streptophyta</taxon>
        <taxon>Embryophyta</taxon>
        <taxon>Tracheophyta</taxon>
        <taxon>Spermatophyta</taxon>
        <taxon>Magnoliopsida</taxon>
        <taxon>eudicotyledons</taxon>
        <taxon>Gunneridae</taxon>
        <taxon>Pentapetalae</taxon>
        <taxon>rosids</taxon>
        <taxon>malvids</taxon>
        <taxon>Brassicales</taxon>
        <taxon>Brassicaceae</taxon>
        <taxon>Camelineae</taxon>
        <taxon>Arabidopsis</taxon>
    </lineage>
</organism>
<dbReference type="EMBL" id="AJ577585">
    <property type="protein sequence ID" value="CAE12172.1"/>
    <property type="molecule type" value="mRNA"/>
</dbReference>
<dbReference type="EMBL" id="AC016447">
    <property type="protein sequence ID" value="AAG52603.1"/>
    <property type="status" value="ALT_SEQ"/>
    <property type="molecule type" value="Genomic_DNA"/>
</dbReference>
<dbReference type="EMBL" id="CP002684">
    <property type="protein sequence ID" value="AEE34770.1"/>
    <property type="molecule type" value="Genomic_DNA"/>
</dbReference>
<dbReference type="EMBL" id="CP002684">
    <property type="protein sequence ID" value="AEE34771.1"/>
    <property type="molecule type" value="Genomic_DNA"/>
</dbReference>
<dbReference type="EMBL" id="AY735551">
    <property type="protein sequence ID" value="AAU44421.1"/>
    <property type="molecule type" value="mRNA"/>
</dbReference>
<dbReference type="EMBL" id="AY735552">
    <property type="protein sequence ID" value="AAU44422.1"/>
    <property type="molecule type" value="mRNA"/>
</dbReference>
<dbReference type="EMBL" id="AY924719">
    <property type="protein sequence ID" value="AAX23794.1"/>
    <property type="molecule type" value="mRNA"/>
</dbReference>
<dbReference type="PIR" id="H96705">
    <property type="entry name" value="H96705"/>
</dbReference>
<dbReference type="RefSeq" id="NP_001031251.1">
    <molecule id="Q5XVH0-2"/>
    <property type="nucleotide sequence ID" value="NM_001036174.2"/>
</dbReference>
<dbReference type="RefSeq" id="NP_176991.2">
    <molecule id="Q5XVH0-1"/>
    <property type="nucleotide sequence ID" value="NM_105495.3"/>
</dbReference>
<dbReference type="SMR" id="Q5XVH0"/>
<dbReference type="BioGRID" id="28374">
    <property type="interactions" value="24"/>
</dbReference>
<dbReference type="FunCoup" id="Q5XVH0">
    <property type="interactions" value="15"/>
</dbReference>
<dbReference type="IntAct" id="Q5XVH0">
    <property type="interactions" value="24"/>
</dbReference>
<dbReference type="STRING" id="3702.Q5XVH0"/>
<dbReference type="PaxDb" id="3702-AT1G68240.1"/>
<dbReference type="EnsemblPlants" id="AT1G68240.1">
    <molecule id="Q5XVH0-1"/>
    <property type="protein sequence ID" value="AT1G68240.1"/>
    <property type="gene ID" value="AT1G68240"/>
</dbReference>
<dbReference type="EnsemblPlants" id="AT1G68240.2">
    <molecule id="Q5XVH0-2"/>
    <property type="protein sequence ID" value="AT1G68240.2"/>
    <property type="gene ID" value="AT1G68240"/>
</dbReference>
<dbReference type="GeneID" id="843153"/>
<dbReference type="Gramene" id="AT1G68240.1">
    <molecule id="Q5XVH0-1"/>
    <property type="protein sequence ID" value="AT1G68240.1"/>
    <property type="gene ID" value="AT1G68240"/>
</dbReference>
<dbReference type="Gramene" id="AT1G68240.2">
    <molecule id="Q5XVH0-2"/>
    <property type="protein sequence ID" value="AT1G68240.2"/>
    <property type="gene ID" value="AT1G68240"/>
</dbReference>
<dbReference type="KEGG" id="ath:AT1G68240"/>
<dbReference type="Araport" id="AT1G68240"/>
<dbReference type="TAIR" id="AT1G68240"/>
<dbReference type="HOGENOM" id="CLU_1404194_0_0_1"/>
<dbReference type="InParanoid" id="Q5XVH0"/>
<dbReference type="OMA" id="HKEGTHE"/>
<dbReference type="OrthoDB" id="1094724at2759"/>
<dbReference type="PhylomeDB" id="Q5XVH0"/>
<dbReference type="PRO" id="PR:Q5XVH0"/>
<dbReference type="Proteomes" id="UP000006548">
    <property type="component" value="Chromosome 1"/>
</dbReference>
<dbReference type="ExpressionAtlas" id="Q5XVH0">
    <property type="expression patterns" value="baseline and differential"/>
</dbReference>
<dbReference type="GO" id="GO:0005634">
    <property type="term" value="C:nucleus"/>
    <property type="evidence" value="ECO:0007669"/>
    <property type="project" value="UniProtKB-SubCell"/>
</dbReference>
<dbReference type="GO" id="GO:0003677">
    <property type="term" value="F:DNA binding"/>
    <property type="evidence" value="ECO:0007669"/>
    <property type="project" value="UniProtKB-KW"/>
</dbReference>
<dbReference type="GO" id="GO:0003700">
    <property type="term" value="F:DNA-binding transcription factor activity"/>
    <property type="evidence" value="ECO:0000250"/>
    <property type="project" value="TAIR"/>
</dbReference>
<dbReference type="GO" id="GO:0046983">
    <property type="term" value="F:protein dimerization activity"/>
    <property type="evidence" value="ECO:0007669"/>
    <property type="project" value="InterPro"/>
</dbReference>
<dbReference type="GO" id="GO:0006355">
    <property type="term" value="P:regulation of DNA-templated transcription"/>
    <property type="evidence" value="ECO:0000314"/>
    <property type="project" value="UniProtKB"/>
</dbReference>
<dbReference type="GO" id="GO:0010262">
    <property type="term" value="P:somatic embryogenesis"/>
    <property type="evidence" value="ECO:0000315"/>
    <property type="project" value="UniProtKB"/>
</dbReference>
<dbReference type="CDD" id="cd19698">
    <property type="entry name" value="bHLH_AtMEE8_like"/>
    <property type="match status" value="1"/>
</dbReference>
<dbReference type="Gene3D" id="4.10.280.10">
    <property type="entry name" value="Helix-loop-helix DNA-binding domain"/>
    <property type="match status" value="1"/>
</dbReference>
<dbReference type="InterPro" id="IPR031066">
    <property type="entry name" value="bHLH_ALC-like_plant"/>
</dbReference>
<dbReference type="InterPro" id="IPR011598">
    <property type="entry name" value="bHLH_dom"/>
</dbReference>
<dbReference type="InterPro" id="IPR036638">
    <property type="entry name" value="HLH_DNA-bd_sf"/>
</dbReference>
<dbReference type="PANTHER" id="PTHR45855:SF30">
    <property type="entry name" value="TRANSCRIPTION FACTOR BHLH109"/>
    <property type="match status" value="1"/>
</dbReference>
<dbReference type="PANTHER" id="PTHR45855">
    <property type="entry name" value="TRANSCRIPTION FACTOR PIF1-RELATED"/>
    <property type="match status" value="1"/>
</dbReference>
<dbReference type="Pfam" id="PF00010">
    <property type="entry name" value="HLH"/>
    <property type="match status" value="1"/>
</dbReference>
<dbReference type="SMART" id="SM00353">
    <property type="entry name" value="HLH"/>
    <property type="match status" value="1"/>
</dbReference>
<dbReference type="SUPFAM" id="SSF47459">
    <property type="entry name" value="HLH, helix-loop-helix DNA-binding domain"/>
    <property type="match status" value="1"/>
</dbReference>
<dbReference type="PROSITE" id="PS50888">
    <property type="entry name" value="BHLH"/>
    <property type="match status" value="1"/>
</dbReference>
<protein>
    <recommendedName>
        <fullName>Transcription factor bHLH109</fullName>
    </recommendedName>
    <alternativeName>
        <fullName>Basic helix-loop-helix protein 109</fullName>
        <shortName>AtbHLH109</shortName>
        <shortName>bHLH 109</shortName>
    </alternativeName>
    <alternativeName>
        <fullName>bHLH transcription factor bHLH109</fullName>
    </alternativeName>
</protein>
<proteinExistence type="evidence at protein level"/>
<name>BH109_ARATH</name>
<keyword id="KW-0025">Alternative splicing</keyword>
<keyword id="KW-0238">DNA-binding</keyword>
<keyword id="KW-0539">Nucleus</keyword>
<keyword id="KW-1185">Reference proteome</keyword>
<keyword id="KW-0804">Transcription</keyword>
<keyword id="KW-0805">Transcription regulation</keyword>